<dbReference type="EC" id="2.7.1.11" evidence="1"/>
<dbReference type="EMBL" id="BA000039">
    <property type="protein sequence ID" value="BAC08868.1"/>
    <property type="molecule type" value="Genomic_DNA"/>
</dbReference>
<dbReference type="RefSeq" id="NP_682106.1">
    <property type="nucleotide sequence ID" value="NC_004113.1"/>
</dbReference>
<dbReference type="RefSeq" id="WP_011057156.1">
    <property type="nucleotide sequence ID" value="NC_004113.1"/>
</dbReference>
<dbReference type="SMR" id="Q8DJB1"/>
<dbReference type="STRING" id="197221.gene:10747914"/>
<dbReference type="EnsemblBacteria" id="BAC08868">
    <property type="protein sequence ID" value="BAC08868"/>
    <property type="gene ID" value="BAC08868"/>
</dbReference>
<dbReference type="KEGG" id="tel:tll1316"/>
<dbReference type="PATRIC" id="fig|197221.4.peg.1384"/>
<dbReference type="eggNOG" id="COG0205">
    <property type="taxonomic scope" value="Bacteria"/>
</dbReference>
<dbReference type="UniPathway" id="UPA00109">
    <property type="reaction ID" value="UER00182"/>
</dbReference>
<dbReference type="Proteomes" id="UP000000440">
    <property type="component" value="Chromosome"/>
</dbReference>
<dbReference type="GO" id="GO:0005945">
    <property type="term" value="C:6-phosphofructokinase complex"/>
    <property type="evidence" value="ECO:0007669"/>
    <property type="project" value="TreeGrafter"/>
</dbReference>
<dbReference type="GO" id="GO:0003872">
    <property type="term" value="F:6-phosphofructokinase activity"/>
    <property type="evidence" value="ECO:0007669"/>
    <property type="project" value="UniProtKB-UniRule"/>
</dbReference>
<dbReference type="GO" id="GO:0016208">
    <property type="term" value="F:AMP binding"/>
    <property type="evidence" value="ECO:0007669"/>
    <property type="project" value="TreeGrafter"/>
</dbReference>
<dbReference type="GO" id="GO:0005524">
    <property type="term" value="F:ATP binding"/>
    <property type="evidence" value="ECO:0007669"/>
    <property type="project" value="UniProtKB-KW"/>
</dbReference>
<dbReference type="GO" id="GO:0047334">
    <property type="term" value="F:diphosphate-fructose-6-phosphate 1-phosphotransferase activity"/>
    <property type="evidence" value="ECO:0007669"/>
    <property type="project" value="InterPro"/>
</dbReference>
<dbReference type="GO" id="GO:0070095">
    <property type="term" value="F:fructose-6-phosphate binding"/>
    <property type="evidence" value="ECO:0007669"/>
    <property type="project" value="TreeGrafter"/>
</dbReference>
<dbReference type="GO" id="GO:0042802">
    <property type="term" value="F:identical protein binding"/>
    <property type="evidence" value="ECO:0007669"/>
    <property type="project" value="TreeGrafter"/>
</dbReference>
<dbReference type="GO" id="GO:0046872">
    <property type="term" value="F:metal ion binding"/>
    <property type="evidence" value="ECO:0007669"/>
    <property type="project" value="UniProtKB-KW"/>
</dbReference>
<dbReference type="GO" id="GO:0048029">
    <property type="term" value="F:monosaccharide binding"/>
    <property type="evidence" value="ECO:0007669"/>
    <property type="project" value="TreeGrafter"/>
</dbReference>
<dbReference type="GO" id="GO:0061621">
    <property type="term" value="P:canonical glycolysis"/>
    <property type="evidence" value="ECO:0007669"/>
    <property type="project" value="TreeGrafter"/>
</dbReference>
<dbReference type="GO" id="GO:0030388">
    <property type="term" value="P:fructose 1,6-bisphosphate metabolic process"/>
    <property type="evidence" value="ECO:0007669"/>
    <property type="project" value="TreeGrafter"/>
</dbReference>
<dbReference type="GO" id="GO:0006002">
    <property type="term" value="P:fructose 6-phosphate metabolic process"/>
    <property type="evidence" value="ECO:0007669"/>
    <property type="project" value="InterPro"/>
</dbReference>
<dbReference type="FunFam" id="3.40.50.460:FF:000002">
    <property type="entry name" value="ATP-dependent 6-phosphofructokinase"/>
    <property type="match status" value="1"/>
</dbReference>
<dbReference type="Gene3D" id="3.40.50.450">
    <property type="match status" value="1"/>
</dbReference>
<dbReference type="Gene3D" id="3.40.50.460">
    <property type="entry name" value="Phosphofructokinase domain"/>
    <property type="match status" value="1"/>
</dbReference>
<dbReference type="HAMAP" id="MF_01976">
    <property type="entry name" value="Phosphofructokinase_III"/>
    <property type="match status" value="1"/>
</dbReference>
<dbReference type="InterPro" id="IPR022953">
    <property type="entry name" value="ATP_PFK"/>
</dbReference>
<dbReference type="InterPro" id="IPR012003">
    <property type="entry name" value="ATP_PFK_prok-type"/>
</dbReference>
<dbReference type="InterPro" id="IPR015912">
    <property type="entry name" value="Phosphofructokinase_CS"/>
</dbReference>
<dbReference type="InterPro" id="IPR000023">
    <property type="entry name" value="Phosphofructokinase_dom"/>
</dbReference>
<dbReference type="InterPro" id="IPR012829">
    <property type="entry name" value="Phosphofructokinase_III"/>
</dbReference>
<dbReference type="InterPro" id="IPR035966">
    <property type="entry name" value="PKF_sf"/>
</dbReference>
<dbReference type="NCBIfam" id="NF002872">
    <property type="entry name" value="PRK03202.1"/>
    <property type="match status" value="1"/>
</dbReference>
<dbReference type="PANTHER" id="PTHR13697:SF52">
    <property type="entry name" value="ATP-DEPENDENT 6-PHOSPHOFRUCTOKINASE 3"/>
    <property type="match status" value="1"/>
</dbReference>
<dbReference type="PANTHER" id="PTHR13697">
    <property type="entry name" value="PHOSPHOFRUCTOKINASE"/>
    <property type="match status" value="1"/>
</dbReference>
<dbReference type="Pfam" id="PF00365">
    <property type="entry name" value="PFK"/>
    <property type="match status" value="1"/>
</dbReference>
<dbReference type="PIRSF" id="PIRSF000532">
    <property type="entry name" value="ATP_PFK_prok"/>
    <property type="match status" value="1"/>
</dbReference>
<dbReference type="PRINTS" id="PR00476">
    <property type="entry name" value="PHFRCTKINASE"/>
</dbReference>
<dbReference type="SUPFAM" id="SSF53784">
    <property type="entry name" value="Phosphofructokinase"/>
    <property type="match status" value="1"/>
</dbReference>
<dbReference type="PROSITE" id="PS00433">
    <property type="entry name" value="PHOSPHOFRUCTOKINASE"/>
    <property type="match status" value="1"/>
</dbReference>
<sequence>MSSSRKRLGVFTSGGDCPGLNTAIRAIVAHATLSYGWEVLGILHATQGLIERKAIPLNAEGLGGMDVLLNMGGTILGAINKGDTLGHADEVIAGYYELGLDALIAICGDGSLRILHQLAQKGNWNFLAIPKTIDNDVALTDRAIGFDTAVNTVVEALNRITSTAASHDRVFVVEVMGRTAGHLALYSGIAGGADIILIPEIPYSIEGICQHLQKLRDRWGRQFALIVVAEGSKQLEEDANHPRHCSIGQYIADKIAQHSPIPIELRVSVLGHIQRGGAPMAMDRLLAAGMGNTAVDLAAQGTFGRMVAWQAGQVVTVPIADVVAKCPRHVDPNSFLIRTAQGLGIYVGDKPMLPYVDPTLCRDQVICAI</sequence>
<protein>
    <recommendedName>
        <fullName evidence="1">ATP-dependent 6-phosphofructokinase</fullName>
        <shortName evidence="1">ATP-PFK</shortName>
        <shortName evidence="1">Phosphofructokinase</shortName>
        <ecNumber evidence="1">2.7.1.11</ecNumber>
    </recommendedName>
    <alternativeName>
        <fullName evidence="1">Phosphohexokinase</fullName>
    </alternativeName>
</protein>
<name>PFKA_THEVB</name>
<reference key="1">
    <citation type="journal article" date="2002" name="DNA Res.">
        <title>Complete genome structure of the thermophilic cyanobacterium Thermosynechococcus elongatus BP-1.</title>
        <authorList>
            <person name="Nakamura Y."/>
            <person name="Kaneko T."/>
            <person name="Sato S."/>
            <person name="Ikeuchi M."/>
            <person name="Katoh H."/>
            <person name="Sasamoto S."/>
            <person name="Watanabe A."/>
            <person name="Iriguchi M."/>
            <person name="Kawashima K."/>
            <person name="Kimura T."/>
            <person name="Kishida Y."/>
            <person name="Kiyokawa C."/>
            <person name="Kohara M."/>
            <person name="Matsumoto M."/>
            <person name="Matsuno A."/>
            <person name="Nakazaki N."/>
            <person name="Shimpo S."/>
            <person name="Sugimoto M."/>
            <person name="Takeuchi C."/>
            <person name="Yamada M."/>
            <person name="Tabata S."/>
        </authorList>
    </citation>
    <scope>NUCLEOTIDE SEQUENCE [LARGE SCALE GENOMIC DNA]</scope>
    <source>
        <strain>NIES-2133 / IAM M-273 / BP-1</strain>
    </source>
</reference>
<organism>
    <name type="scientific">Thermosynechococcus vestitus (strain NIES-2133 / IAM M-273 / BP-1)</name>
    <dbReference type="NCBI Taxonomy" id="197221"/>
    <lineage>
        <taxon>Bacteria</taxon>
        <taxon>Bacillati</taxon>
        <taxon>Cyanobacteriota</taxon>
        <taxon>Cyanophyceae</taxon>
        <taxon>Acaryochloridales</taxon>
        <taxon>Thermosynechococcaceae</taxon>
        <taxon>Thermosynechococcus</taxon>
    </lineage>
</organism>
<feature type="chain" id="PRO_0000111997" description="ATP-dependent 6-phosphofructokinase">
    <location>
        <begin position="1"/>
        <end position="369"/>
    </location>
</feature>
<feature type="active site" description="Proton acceptor" evidence="1">
    <location>
        <position position="134"/>
    </location>
</feature>
<feature type="binding site" evidence="1">
    <location>
        <position position="15"/>
    </location>
    <ligand>
        <name>ATP</name>
        <dbReference type="ChEBI" id="CHEBI:30616"/>
    </ligand>
</feature>
<feature type="binding site" evidence="1">
    <location>
        <begin position="81"/>
        <end position="82"/>
    </location>
    <ligand>
        <name>ATP</name>
        <dbReference type="ChEBI" id="CHEBI:30616"/>
    </ligand>
</feature>
<feature type="binding site" evidence="1">
    <location>
        <begin position="108"/>
        <end position="111"/>
    </location>
    <ligand>
        <name>ATP</name>
        <dbReference type="ChEBI" id="CHEBI:30616"/>
    </ligand>
</feature>
<feature type="binding site" evidence="1">
    <location>
        <position position="109"/>
    </location>
    <ligand>
        <name>Mg(2+)</name>
        <dbReference type="ChEBI" id="CHEBI:18420"/>
        <note>catalytic</note>
    </ligand>
</feature>
<feature type="binding site" description="in other chain" evidence="1">
    <location>
        <begin position="132"/>
        <end position="134"/>
    </location>
    <ligand>
        <name>substrate</name>
        <note>ligand shared between dimeric partners</note>
    </ligand>
</feature>
<feature type="binding site" evidence="1">
    <location>
        <position position="169"/>
    </location>
    <ligand>
        <name>substrate</name>
        <note>ligand shared between dimeric partners</note>
    </ligand>
</feature>
<feature type="binding site" description="in other chain" evidence="1">
    <location>
        <begin position="176"/>
        <end position="178"/>
    </location>
    <ligand>
        <name>substrate</name>
        <note>ligand shared between dimeric partners</note>
    </ligand>
</feature>
<feature type="binding site" description="in other chain" evidence="1">
    <location>
        <position position="230"/>
    </location>
    <ligand>
        <name>substrate</name>
        <note>ligand shared between dimeric partners</note>
    </ligand>
</feature>
<feature type="binding site" evidence="1">
    <location>
        <position position="266"/>
    </location>
    <ligand>
        <name>substrate</name>
        <note>ligand shared between dimeric partners</note>
    </ligand>
</feature>
<feature type="binding site" description="in other chain" evidence="1">
    <location>
        <begin position="272"/>
        <end position="275"/>
    </location>
    <ligand>
        <name>substrate</name>
        <note>ligand shared between dimeric partners</note>
    </ligand>
</feature>
<feature type="site" description="Important for substrate specificity; cannot use PPi as phosphoryl donor" evidence="1">
    <location>
        <position position="110"/>
    </location>
</feature>
<comment type="function">
    <text evidence="1">Catalyzes the phosphorylation of D-fructose 6-phosphate to fructose 1,6-bisphosphate by ATP, the first committing step of glycolysis.</text>
</comment>
<comment type="catalytic activity">
    <reaction evidence="1">
        <text>beta-D-fructose 6-phosphate + ATP = beta-D-fructose 1,6-bisphosphate + ADP + H(+)</text>
        <dbReference type="Rhea" id="RHEA:16109"/>
        <dbReference type="ChEBI" id="CHEBI:15378"/>
        <dbReference type="ChEBI" id="CHEBI:30616"/>
        <dbReference type="ChEBI" id="CHEBI:32966"/>
        <dbReference type="ChEBI" id="CHEBI:57634"/>
        <dbReference type="ChEBI" id="CHEBI:456216"/>
        <dbReference type="EC" id="2.7.1.11"/>
    </reaction>
</comment>
<comment type="cofactor">
    <cofactor evidence="1">
        <name>Mg(2+)</name>
        <dbReference type="ChEBI" id="CHEBI:18420"/>
    </cofactor>
</comment>
<comment type="pathway">
    <text evidence="1">Carbohydrate degradation; glycolysis; D-glyceraldehyde 3-phosphate and glycerone phosphate from D-glucose: step 3/4.</text>
</comment>
<comment type="subunit">
    <text evidence="1">Homodimer or homotetramer.</text>
</comment>
<comment type="subcellular location">
    <subcellularLocation>
        <location evidence="1">Cytoplasm</location>
    </subcellularLocation>
</comment>
<comment type="similarity">
    <text evidence="1">Belongs to the phosphofructokinase type A (PFKA) family. Mixed-substrate PFK group III subfamily.</text>
</comment>
<gene>
    <name evidence="1" type="primary">pfkA</name>
    <name type="ordered locus">tll1316</name>
</gene>
<keyword id="KW-0067">ATP-binding</keyword>
<keyword id="KW-0963">Cytoplasm</keyword>
<keyword id="KW-0324">Glycolysis</keyword>
<keyword id="KW-0418">Kinase</keyword>
<keyword id="KW-0460">Magnesium</keyword>
<keyword id="KW-0479">Metal-binding</keyword>
<keyword id="KW-0547">Nucleotide-binding</keyword>
<keyword id="KW-1185">Reference proteome</keyword>
<keyword id="KW-0808">Transferase</keyword>
<proteinExistence type="inferred from homology"/>
<evidence type="ECO:0000255" key="1">
    <source>
        <dbReference type="HAMAP-Rule" id="MF_01976"/>
    </source>
</evidence>
<accession>Q8DJB1</accession>